<gene>
    <name evidence="1" type="primary">xseB</name>
    <name type="ordered locus">SSA_0675</name>
</gene>
<sequence length="70" mass="7859">MSKEKKFEENLADLEVIVQKLENGDVALEEAIAEFQKGMKLSKELQASLDKAEKTLVKVMQADGTETEME</sequence>
<keyword id="KW-0963">Cytoplasm</keyword>
<keyword id="KW-0269">Exonuclease</keyword>
<keyword id="KW-0378">Hydrolase</keyword>
<keyword id="KW-0540">Nuclease</keyword>
<keyword id="KW-1185">Reference proteome</keyword>
<reference key="1">
    <citation type="journal article" date="2007" name="J. Bacteriol.">
        <title>Genome of the opportunistic pathogen Streptococcus sanguinis.</title>
        <authorList>
            <person name="Xu P."/>
            <person name="Alves J.M."/>
            <person name="Kitten T."/>
            <person name="Brown A."/>
            <person name="Chen Z."/>
            <person name="Ozaki L.S."/>
            <person name="Manque P."/>
            <person name="Ge X."/>
            <person name="Serrano M.G."/>
            <person name="Puiu D."/>
            <person name="Hendricks S."/>
            <person name="Wang Y."/>
            <person name="Chaplin M.D."/>
            <person name="Akan D."/>
            <person name="Paik S."/>
            <person name="Peterson D.L."/>
            <person name="Macrina F.L."/>
            <person name="Buck G.A."/>
        </authorList>
    </citation>
    <scope>NUCLEOTIDE SEQUENCE [LARGE SCALE GENOMIC DNA]</scope>
    <source>
        <strain>SK36</strain>
    </source>
</reference>
<proteinExistence type="inferred from homology"/>
<name>EX7S_STRSV</name>
<organism>
    <name type="scientific">Streptococcus sanguinis (strain SK36)</name>
    <dbReference type="NCBI Taxonomy" id="388919"/>
    <lineage>
        <taxon>Bacteria</taxon>
        <taxon>Bacillati</taxon>
        <taxon>Bacillota</taxon>
        <taxon>Bacilli</taxon>
        <taxon>Lactobacillales</taxon>
        <taxon>Streptococcaceae</taxon>
        <taxon>Streptococcus</taxon>
    </lineage>
</organism>
<dbReference type="EC" id="3.1.11.6" evidence="1"/>
<dbReference type="EMBL" id="CP000387">
    <property type="protein sequence ID" value="ABN44113.1"/>
    <property type="molecule type" value="Genomic_DNA"/>
</dbReference>
<dbReference type="RefSeq" id="WP_002896137.1">
    <property type="nucleotide sequence ID" value="NZ_CAXTYR010000004.1"/>
</dbReference>
<dbReference type="RefSeq" id="YP_001034663.1">
    <property type="nucleotide sequence ID" value="NC_009009.1"/>
</dbReference>
<dbReference type="SMR" id="A3CLQ8"/>
<dbReference type="STRING" id="388919.SSA_0675"/>
<dbReference type="KEGG" id="ssa:SSA_0675"/>
<dbReference type="PATRIC" id="fig|388919.9.peg.650"/>
<dbReference type="eggNOG" id="COG1722">
    <property type="taxonomic scope" value="Bacteria"/>
</dbReference>
<dbReference type="HOGENOM" id="CLU_145918_3_2_9"/>
<dbReference type="OrthoDB" id="9798666at2"/>
<dbReference type="Proteomes" id="UP000002148">
    <property type="component" value="Chromosome"/>
</dbReference>
<dbReference type="GO" id="GO:0005829">
    <property type="term" value="C:cytosol"/>
    <property type="evidence" value="ECO:0007669"/>
    <property type="project" value="TreeGrafter"/>
</dbReference>
<dbReference type="GO" id="GO:0009318">
    <property type="term" value="C:exodeoxyribonuclease VII complex"/>
    <property type="evidence" value="ECO:0007669"/>
    <property type="project" value="InterPro"/>
</dbReference>
<dbReference type="GO" id="GO:0008855">
    <property type="term" value="F:exodeoxyribonuclease VII activity"/>
    <property type="evidence" value="ECO:0007669"/>
    <property type="project" value="UniProtKB-UniRule"/>
</dbReference>
<dbReference type="GO" id="GO:0006308">
    <property type="term" value="P:DNA catabolic process"/>
    <property type="evidence" value="ECO:0007669"/>
    <property type="project" value="UniProtKB-UniRule"/>
</dbReference>
<dbReference type="Gene3D" id="1.10.287.1040">
    <property type="entry name" value="Exonuclease VII, small subunit"/>
    <property type="match status" value="1"/>
</dbReference>
<dbReference type="HAMAP" id="MF_00337">
    <property type="entry name" value="Exonuc_7_S"/>
    <property type="match status" value="1"/>
</dbReference>
<dbReference type="InterPro" id="IPR003761">
    <property type="entry name" value="Exonuc_VII_S"/>
</dbReference>
<dbReference type="InterPro" id="IPR037004">
    <property type="entry name" value="Exonuc_VII_ssu_sf"/>
</dbReference>
<dbReference type="NCBIfam" id="NF002138">
    <property type="entry name" value="PRK00977.1-2"/>
    <property type="match status" value="1"/>
</dbReference>
<dbReference type="NCBIfam" id="TIGR01280">
    <property type="entry name" value="xseB"/>
    <property type="match status" value="1"/>
</dbReference>
<dbReference type="PANTHER" id="PTHR34137">
    <property type="entry name" value="EXODEOXYRIBONUCLEASE 7 SMALL SUBUNIT"/>
    <property type="match status" value="1"/>
</dbReference>
<dbReference type="PANTHER" id="PTHR34137:SF1">
    <property type="entry name" value="EXODEOXYRIBONUCLEASE 7 SMALL SUBUNIT"/>
    <property type="match status" value="1"/>
</dbReference>
<dbReference type="Pfam" id="PF02609">
    <property type="entry name" value="Exonuc_VII_S"/>
    <property type="match status" value="1"/>
</dbReference>
<dbReference type="PIRSF" id="PIRSF006488">
    <property type="entry name" value="Exonuc_VII_S"/>
    <property type="match status" value="1"/>
</dbReference>
<dbReference type="SUPFAM" id="SSF116842">
    <property type="entry name" value="XseB-like"/>
    <property type="match status" value="1"/>
</dbReference>
<protein>
    <recommendedName>
        <fullName evidence="1">Exodeoxyribonuclease 7 small subunit</fullName>
        <ecNumber evidence="1">3.1.11.6</ecNumber>
    </recommendedName>
    <alternativeName>
        <fullName evidence="1">Exodeoxyribonuclease VII small subunit</fullName>
        <shortName evidence="1">Exonuclease VII small subunit</shortName>
    </alternativeName>
</protein>
<evidence type="ECO:0000255" key="1">
    <source>
        <dbReference type="HAMAP-Rule" id="MF_00337"/>
    </source>
</evidence>
<comment type="function">
    <text evidence="1">Bidirectionally degrades single-stranded DNA into large acid-insoluble oligonucleotides, which are then degraded further into small acid-soluble oligonucleotides.</text>
</comment>
<comment type="catalytic activity">
    <reaction evidence="1">
        <text>Exonucleolytic cleavage in either 5'- to 3'- or 3'- to 5'-direction to yield nucleoside 5'-phosphates.</text>
        <dbReference type="EC" id="3.1.11.6"/>
    </reaction>
</comment>
<comment type="subunit">
    <text evidence="1">Heterooligomer composed of large and small subunits.</text>
</comment>
<comment type="subcellular location">
    <subcellularLocation>
        <location evidence="1">Cytoplasm</location>
    </subcellularLocation>
</comment>
<comment type="similarity">
    <text evidence="1">Belongs to the XseB family.</text>
</comment>
<accession>A3CLQ8</accession>
<feature type="chain" id="PRO_0000303762" description="Exodeoxyribonuclease 7 small subunit">
    <location>
        <begin position="1"/>
        <end position="70"/>
    </location>
</feature>